<organism>
    <name type="scientific">Mus musculus</name>
    <name type="common">Mouse</name>
    <dbReference type="NCBI Taxonomy" id="10090"/>
    <lineage>
        <taxon>Eukaryota</taxon>
        <taxon>Metazoa</taxon>
        <taxon>Chordata</taxon>
        <taxon>Craniata</taxon>
        <taxon>Vertebrata</taxon>
        <taxon>Euteleostomi</taxon>
        <taxon>Mammalia</taxon>
        <taxon>Eutheria</taxon>
        <taxon>Euarchontoglires</taxon>
        <taxon>Glires</taxon>
        <taxon>Rodentia</taxon>
        <taxon>Myomorpha</taxon>
        <taxon>Muroidea</taxon>
        <taxon>Muridae</taxon>
        <taxon>Murinae</taxon>
        <taxon>Mus</taxon>
        <taxon>Mus</taxon>
    </lineage>
</organism>
<keyword id="KW-0325">Glycoprotein</keyword>
<keyword id="KW-0407">Ion channel</keyword>
<keyword id="KW-0406">Ion transport</keyword>
<keyword id="KW-0472">Membrane</keyword>
<keyword id="KW-1185">Reference proteome</keyword>
<keyword id="KW-0812">Transmembrane</keyword>
<keyword id="KW-1133">Transmembrane helix</keyword>
<keyword id="KW-0813">Transport</keyword>
<evidence type="ECO:0000250" key="1"/>
<evidence type="ECO:0000255" key="2"/>
<evidence type="ECO:0000269" key="3">
    <source>
    </source>
</evidence>
<evidence type="ECO:0000305" key="4"/>
<protein>
    <recommendedName>
        <fullName>Calcium-activated potassium channel subunit beta-1</fullName>
    </recommendedName>
    <alternativeName>
        <fullName>BK channel subunit beta-1</fullName>
        <shortName>BKbeta</shortName>
        <shortName>BKbeta1</shortName>
    </alternativeName>
    <alternativeName>
        <fullName>Calcium-activated potassium channel, subfamily M subunit beta-1</fullName>
        <shortName>Calcium-activated potassium channel subunit beta</shortName>
    </alternativeName>
    <alternativeName>
        <fullName>Charybdotoxin receptor subunit beta-1</fullName>
    </alternativeName>
    <alternativeName>
        <fullName>K(VCA)beta-1</fullName>
    </alternativeName>
    <alternativeName>
        <fullName>Maxi K channel subunit beta-1</fullName>
    </alternativeName>
    <alternativeName>
        <fullName>Slo-beta-1</fullName>
        <shortName>Slo-beta</shortName>
    </alternativeName>
</protein>
<sequence>MGKKLVMAQKRGETRALCLGVAMVVCAAITYYVLGTTVLPLYQKSVWTQESICHLIETNIKDQEELEGKKVPQYPCLWVNVSAVGRWAMLYHTEDTRDQNQQCSYIPRNLDNYQTALADVKKVRANFYKHHEFYCLSAPQVNETSVVYQRLYGPQVLLFSFFWPTFLLTGGLLLIAMVKLNRSLSILAAQK</sequence>
<proteinExistence type="evidence at protein level"/>
<feature type="chain" id="PRO_0000187047" description="Calcium-activated potassium channel subunit beta-1">
    <location>
        <begin position="1"/>
        <end position="191"/>
    </location>
</feature>
<feature type="topological domain" description="Cytoplasmic" evidence="2">
    <location>
        <begin position="1"/>
        <end position="18"/>
    </location>
</feature>
<feature type="transmembrane region" description="Helical; Name=1" evidence="2">
    <location>
        <begin position="19"/>
        <end position="39"/>
    </location>
</feature>
<feature type="topological domain" description="Extracellular" evidence="2">
    <location>
        <begin position="40"/>
        <end position="155"/>
    </location>
</feature>
<feature type="transmembrane region" description="Helical; Name=2" evidence="2">
    <location>
        <begin position="156"/>
        <end position="176"/>
    </location>
</feature>
<feature type="topological domain" description="Cytoplasmic" evidence="2">
    <location>
        <begin position="177"/>
        <end position="191"/>
    </location>
</feature>
<feature type="glycosylation site" description="N-linked (GlcNAc...) asparagine" evidence="2">
    <location>
        <position position="80"/>
    </location>
</feature>
<feature type="glycosylation site" description="N-linked (GlcNAc...) asparagine" evidence="2">
    <location>
        <position position="142"/>
    </location>
</feature>
<feature type="sequence conflict" description="In Ref. 1; AAD11857." evidence="4" ref="1">
    <original>T</original>
    <variation>A</variation>
    <location>
        <position position="93"/>
    </location>
</feature>
<feature type="sequence conflict" description="In Ref. 1 and 3." evidence="4" ref="1 3">
    <original>L</original>
    <variation>I</variation>
    <location>
        <position position="173"/>
    </location>
</feature>
<accession>Q8CAE3</accession>
<accession>O35336</accession>
<accession>O35645</accession>
<comment type="function">
    <text evidence="3">Regulatory subunit of the calcium activated potassium KCNMA1 (maxiK) channel. Modulates the calcium sensitivity and gating kinetics of KCNMA1, thereby contributing to KCNMA1 channel diversity. Increases the apparent Ca(2+)/voltage sensitivity of the KCNMA1 channel. It also modifies KCNMA1 channel kinetics and alters its pharmacological properties. It slows down the activation and the deactivation kinetics of the channel. Acts as a negative regulator of smooth muscle contraction by enhancing the calcium sensitivity to KCNMA1. Its presence is also a requirement for internal binding of the KCNMA1 channel opener dehydrosoyasaponin I (DHS-1) triterpene glycoside and for external binding of the agonist hormone 17-beta-estradiol (E2). Increases the binding activity of charybdotoxin (CTX) toxin to KCNMA1 peptide blocker by increasing the CTX association rate and decreasing the dissociation rate.</text>
</comment>
<comment type="subunit">
    <text evidence="1">Interacts with KCNMA1 tetramer. There are probably 4 molecules of KCMNB1 per KCNMA1 tetramer (By similarity).</text>
</comment>
<comment type="interaction">
    <interactant intactId="EBI-15575793">
        <id>Q8CAE3</id>
    </interactant>
    <interactant intactId="EBI-15575817">
        <id>Q08460-4</id>
        <label>Kcnma1</label>
    </interactant>
    <organismsDiffer>false</organismsDiffer>
    <experiments>2</experiments>
</comment>
<comment type="subcellular location">
    <subcellularLocation>
        <location>Membrane</location>
        <topology>Multi-pass membrane protein</topology>
    </subcellularLocation>
</comment>
<comment type="tissue specificity">
    <text evidence="3">Expressed in many tissues containing smooth muscles. In brain and heart, it is not expressed except in the vasculature, such as cerebral arteries, aorta and corona arteries.</text>
</comment>
<comment type="PTM">
    <text evidence="1">N-glycosylated.</text>
</comment>
<comment type="similarity">
    <text evidence="4">Belongs to the KCNMB (TC 8.A.14.1) family. KCNMB1 subfamily.</text>
</comment>
<dbReference type="EMBL" id="AF020711">
    <property type="protein sequence ID" value="AAD11857.1"/>
    <property type="molecule type" value="mRNA"/>
</dbReference>
<dbReference type="EMBL" id="AJ001291">
    <property type="protein sequence ID" value="CAA04651.1"/>
    <property type="molecule type" value="mRNA"/>
</dbReference>
<dbReference type="EMBL" id="AK038987">
    <property type="protein sequence ID" value="BAC30193.1"/>
    <property type="molecule type" value="mRNA"/>
</dbReference>
<dbReference type="EMBL" id="BC013338">
    <property type="protein sequence ID" value="AAH13338.1"/>
    <property type="molecule type" value="mRNA"/>
</dbReference>
<dbReference type="CCDS" id="CCDS24538.1"/>
<dbReference type="RefSeq" id="NP_112446.2">
    <property type="nucleotide sequence ID" value="NM_031169.4"/>
</dbReference>
<dbReference type="RefSeq" id="XP_006514604.1">
    <property type="nucleotide sequence ID" value="XM_006514541.3"/>
</dbReference>
<dbReference type="SMR" id="Q8CAE3"/>
<dbReference type="BioGRID" id="200915">
    <property type="interactions" value="1"/>
</dbReference>
<dbReference type="DIP" id="DIP-46326N"/>
<dbReference type="FunCoup" id="Q8CAE3">
    <property type="interactions" value="466"/>
</dbReference>
<dbReference type="IntAct" id="Q8CAE3">
    <property type="interactions" value="1"/>
</dbReference>
<dbReference type="STRING" id="10090.ENSMUSP00000020362"/>
<dbReference type="GlyCosmos" id="Q8CAE3">
    <property type="glycosylation" value="2 sites, No reported glycans"/>
</dbReference>
<dbReference type="GlyGen" id="Q8CAE3">
    <property type="glycosylation" value="2 sites"/>
</dbReference>
<dbReference type="iPTMnet" id="Q8CAE3"/>
<dbReference type="PhosphoSitePlus" id="Q8CAE3"/>
<dbReference type="PaxDb" id="10090-ENSMUSP00000020362"/>
<dbReference type="ProteomicsDB" id="269254"/>
<dbReference type="DNASU" id="16533"/>
<dbReference type="GeneID" id="16533"/>
<dbReference type="KEGG" id="mmu:16533"/>
<dbReference type="AGR" id="MGI:1334203"/>
<dbReference type="CTD" id="3779"/>
<dbReference type="MGI" id="MGI:1334203">
    <property type="gene designation" value="Kcnmb1"/>
</dbReference>
<dbReference type="eggNOG" id="ENOG502RZA0">
    <property type="taxonomic scope" value="Eukaryota"/>
</dbReference>
<dbReference type="InParanoid" id="Q8CAE3"/>
<dbReference type="OrthoDB" id="5962477at2759"/>
<dbReference type="PhylomeDB" id="Q8CAE3"/>
<dbReference type="Reactome" id="R-MMU-1296052">
    <property type="pathway name" value="Ca2+ activated K+ channels"/>
</dbReference>
<dbReference type="BioGRID-ORCS" id="16533">
    <property type="hits" value="2 hits in 77 CRISPR screens"/>
</dbReference>
<dbReference type="PRO" id="PR:Q8CAE3"/>
<dbReference type="Proteomes" id="UP000000589">
    <property type="component" value="Unplaced"/>
</dbReference>
<dbReference type="RNAct" id="Q8CAE3">
    <property type="molecule type" value="protein"/>
</dbReference>
<dbReference type="GO" id="GO:0016020">
    <property type="term" value="C:membrane"/>
    <property type="evidence" value="ECO:0000314"/>
    <property type="project" value="MGI"/>
</dbReference>
<dbReference type="GO" id="GO:0005886">
    <property type="term" value="C:plasma membrane"/>
    <property type="evidence" value="ECO:0000304"/>
    <property type="project" value="Reactome"/>
</dbReference>
<dbReference type="GO" id="GO:0008076">
    <property type="term" value="C:voltage-gated potassium channel complex"/>
    <property type="evidence" value="ECO:0000316"/>
    <property type="project" value="MGI"/>
</dbReference>
<dbReference type="GO" id="GO:0015269">
    <property type="term" value="F:calcium-activated potassium channel activity"/>
    <property type="evidence" value="ECO:0000316"/>
    <property type="project" value="MGI"/>
</dbReference>
<dbReference type="InterPro" id="IPR003930">
    <property type="entry name" value="K_chnl_Ca-activ_BK_bsu"/>
</dbReference>
<dbReference type="PANTHER" id="PTHR10258">
    <property type="entry name" value="CALCIUM-ACTIVATED POTASSIUM CHANNEL SUBUNIT BETA"/>
    <property type="match status" value="1"/>
</dbReference>
<dbReference type="PANTHER" id="PTHR10258:SF1">
    <property type="entry name" value="CALCIUM-ACTIVATED POTASSIUM CHANNEL SUBUNIT BETA-1"/>
    <property type="match status" value="1"/>
</dbReference>
<dbReference type="Pfam" id="PF03185">
    <property type="entry name" value="CaKB"/>
    <property type="match status" value="1"/>
</dbReference>
<dbReference type="PRINTS" id="PR01450">
    <property type="entry name" value="BKCHANNELB"/>
</dbReference>
<name>KCMB1_MOUSE</name>
<gene>
    <name type="primary">Kcnmb1</name>
</gene>
<reference key="1">
    <citation type="journal article" date="1999" name="Genomics">
        <title>Human and rodent MaxiK channel beta-subunit genes: cloning and characterization.</title>
        <authorList>
            <person name="Jiang Z."/>
            <person name="Wallner M."/>
            <person name="Meera P."/>
            <person name="Toro L."/>
        </authorList>
    </citation>
    <scope>NUCLEOTIDE SEQUENCE [MRNA]</scope>
    <source>
        <strain>C57BL/6J</strain>
        <tissue>Intestinal smooth muscle</tissue>
    </source>
</reference>
<reference key="2">
    <citation type="submission" date="1997-08" db="EMBL/GenBank/DDBJ databases">
        <title>Cloning and functional analysis of a calcium activated potassium channel beta-subunit from murine heart muscle.</title>
        <authorList>
            <person name="Metzler M.H.F."/>
            <person name="Repp R."/>
            <person name="Zibuschka C."/>
            <person name="Dreyer F."/>
            <person name="Repp H."/>
        </authorList>
    </citation>
    <scope>NUCLEOTIDE SEQUENCE [MRNA]</scope>
    <source>
        <strain>BALB/cJ</strain>
        <tissue>Heart muscle</tissue>
    </source>
</reference>
<reference key="3">
    <citation type="journal article" date="2005" name="Science">
        <title>The transcriptional landscape of the mammalian genome.</title>
        <authorList>
            <person name="Carninci P."/>
            <person name="Kasukawa T."/>
            <person name="Katayama S."/>
            <person name="Gough J."/>
            <person name="Frith M.C."/>
            <person name="Maeda N."/>
            <person name="Oyama R."/>
            <person name="Ravasi T."/>
            <person name="Lenhard B."/>
            <person name="Wells C."/>
            <person name="Kodzius R."/>
            <person name="Shimokawa K."/>
            <person name="Bajic V.B."/>
            <person name="Brenner S.E."/>
            <person name="Batalov S."/>
            <person name="Forrest A.R."/>
            <person name="Zavolan M."/>
            <person name="Davis M.J."/>
            <person name="Wilming L.G."/>
            <person name="Aidinis V."/>
            <person name="Allen J.E."/>
            <person name="Ambesi-Impiombato A."/>
            <person name="Apweiler R."/>
            <person name="Aturaliya R.N."/>
            <person name="Bailey T.L."/>
            <person name="Bansal M."/>
            <person name="Baxter L."/>
            <person name="Beisel K.W."/>
            <person name="Bersano T."/>
            <person name="Bono H."/>
            <person name="Chalk A.M."/>
            <person name="Chiu K.P."/>
            <person name="Choudhary V."/>
            <person name="Christoffels A."/>
            <person name="Clutterbuck D.R."/>
            <person name="Crowe M.L."/>
            <person name="Dalla E."/>
            <person name="Dalrymple B.P."/>
            <person name="de Bono B."/>
            <person name="Della Gatta G."/>
            <person name="di Bernardo D."/>
            <person name="Down T."/>
            <person name="Engstrom P."/>
            <person name="Fagiolini M."/>
            <person name="Faulkner G."/>
            <person name="Fletcher C.F."/>
            <person name="Fukushima T."/>
            <person name="Furuno M."/>
            <person name="Futaki S."/>
            <person name="Gariboldi M."/>
            <person name="Georgii-Hemming P."/>
            <person name="Gingeras T.R."/>
            <person name="Gojobori T."/>
            <person name="Green R.E."/>
            <person name="Gustincich S."/>
            <person name="Harbers M."/>
            <person name="Hayashi Y."/>
            <person name="Hensch T.K."/>
            <person name="Hirokawa N."/>
            <person name="Hill D."/>
            <person name="Huminiecki L."/>
            <person name="Iacono M."/>
            <person name="Ikeo K."/>
            <person name="Iwama A."/>
            <person name="Ishikawa T."/>
            <person name="Jakt M."/>
            <person name="Kanapin A."/>
            <person name="Katoh M."/>
            <person name="Kawasawa Y."/>
            <person name="Kelso J."/>
            <person name="Kitamura H."/>
            <person name="Kitano H."/>
            <person name="Kollias G."/>
            <person name="Krishnan S.P."/>
            <person name="Kruger A."/>
            <person name="Kummerfeld S.K."/>
            <person name="Kurochkin I.V."/>
            <person name="Lareau L.F."/>
            <person name="Lazarevic D."/>
            <person name="Lipovich L."/>
            <person name="Liu J."/>
            <person name="Liuni S."/>
            <person name="McWilliam S."/>
            <person name="Madan Babu M."/>
            <person name="Madera M."/>
            <person name="Marchionni L."/>
            <person name="Matsuda H."/>
            <person name="Matsuzawa S."/>
            <person name="Miki H."/>
            <person name="Mignone F."/>
            <person name="Miyake S."/>
            <person name="Morris K."/>
            <person name="Mottagui-Tabar S."/>
            <person name="Mulder N."/>
            <person name="Nakano N."/>
            <person name="Nakauchi H."/>
            <person name="Ng P."/>
            <person name="Nilsson R."/>
            <person name="Nishiguchi S."/>
            <person name="Nishikawa S."/>
            <person name="Nori F."/>
            <person name="Ohara O."/>
            <person name="Okazaki Y."/>
            <person name="Orlando V."/>
            <person name="Pang K.C."/>
            <person name="Pavan W.J."/>
            <person name="Pavesi G."/>
            <person name="Pesole G."/>
            <person name="Petrovsky N."/>
            <person name="Piazza S."/>
            <person name="Reed J."/>
            <person name="Reid J.F."/>
            <person name="Ring B.Z."/>
            <person name="Ringwald M."/>
            <person name="Rost B."/>
            <person name="Ruan Y."/>
            <person name="Salzberg S.L."/>
            <person name="Sandelin A."/>
            <person name="Schneider C."/>
            <person name="Schoenbach C."/>
            <person name="Sekiguchi K."/>
            <person name="Semple C.A."/>
            <person name="Seno S."/>
            <person name="Sessa L."/>
            <person name="Sheng Y."/>
            <person name="Shibata Y."/>
            <person name="Shimada H."/>
            <person name="Shimada K."/>
            <person name="Silva D."/>
            <person name="Sinclair B."/>
            <person name="Sperling S."/>
            <person name="Stupka E."/>
            <person name="Sugiura K."/>
            <person name="Sultana R."/>
            <person name="Takenaka Y."/>
            <person name="Taki K."/>
            <person name="Tammoja K."/>
            <person name="Tan S.L."/>
            <person name="Tang S."/>
            <person name="Taylor M.S."/>
            <person name="Tegner J."/>
            <person name="Teichmann S.A."/>
            <person name="Ueda H.R."/>
            <person name="van Nimwegen E."/>
            <person name="Verardo R."/>
            <person name="Wei C.L."/>
            <person name="Yagi K."/>
            <person name="Yamanishi H."/>
            <person name="Zabarovsky E."/>
            <person name="Zhu S."/>
            <person name="Zimmer A."/>
            <person name="Hide W."/>
            <person name="Bult C."/>
            <person name="Grimmond S.M."/>
            <person name="Teasdale R.D."/>
            <person name="Liu E.T."/>
            <person name="Brusic V."/>
            <person name="Quackenbush J."/>
            <person name="Wahlestedt C."/>
            <person name="Mattick J.S."/>
            <person name="Hume D.A."/>
            <person name="Kai C."/>
            <person name="Sasaki D."/>
            <person name="Tomaru Y."/>
            <person name="Fukuda S."/>
            <person name="Kanamori-Katayama M."/>
            <person name="Suzuki M."/>
            <person name="Aoki J."/>
            <person name="Arakawa T."/>
            <person name="Iida J."/>
            <person name="Imamura K."/>
            <person name="Itoh M."/>
            <person name="Kato T."/>
            <person name="Kawaji H."/>
            <person name="Kawagashira N."/>
            <person name="Kawashima T."/>
            <person name="Kojima M."/>
            <person name="Kondo S."/>
            <person name="Konno H."/>
            <person name="Nakano K."/>
            <person name="Ninomiya N."/>
            <person name="Nishio T."/>
            <person name="Okada M."/>
            <person name="Plessy C."/>
            <person name="Shibata K."/>
            <person name="Shiraki T."/>
            <person name="Suzuki S."/>
            <person name="Tagami M."/>
            <person name="Waki K."/>
            <person name="Watahiki A."/>
            <person name="Okamura-Oho Y."/>
            <person name="Suzuki H."/>
            <person name="Kawai J."/>
            <person name="Hayashizaki Y."/>
        </authorList>
    </citation>
    <scope>NUCLEOTIDE SEQUENCE [LARGE SCALE MRNA]</scope>
    <source>
        <strain>C57BL/6J</strain>
        <tissue>Hypothalamus</tissue>
    </source>
</reference>
<reference key="4">
    <citation type="journal article" date="2004" name="Genome Res.">
        <title>The status, quality, and expansion of the NIH full-length cDNA project: the Mammalian Gene Collection (MGC).</title>
        <authorList>
            <consortium name="The MGC Project Team"/>
        </authorList>
    </citation>
    <scope>NUCLEOTIDE SEQUENCE [LARGE SCALE MRNA]</scope>
    <source>
        <tissue>Mammary tumor</tissue>
    </source>
</reference>
<reference key="5">
    <citation type="journal article" date="2000" name="Nature">
        <title>Vasoregulation by the beta1 subunit of the calcium-activated potassium channel.</title>
        <authorList>
            <person name="Brenner R."/>
            <person name="Perez G.J."/>
            <person name="Bonev A.D."/>
            <person name="Eckman D.M."/>
            <person name="Kosek J.C."/>
            <person name="Wiler S.W."/>
            <person name="Patterson A.J."/>
            <person name="Nelson M.T."/>
            <person name="Aldrich R.W."/>
        </authorList>
    </citation>
    <scope>FUNCTION</scope>
    <scope>TISSUE SPECIFICITY</scope>
</reference>